<name>IF2_STRPZ</name>
<protein>
    <recommendedName>
        <fullName evidence="2">Translation initiation factor IF-2</fullName>
    </recommendedName>
</protein>
<proteinExistence type="inferred from homology"/>
<feature type="chain" id="PRO_1000093834" description="Translation initiation factor IF-2">
    <location>
        <begin position="1"/>
        <end position="953"/>
    </location>
</feature>
<feature type="domain" description="tr-type G">
    <location>
        <begin position="454"/>
        <end position="623"/>
    </location>
</feature>
<feature type="region of interest" description="Disordered" evidence="3">
    <location>
        <begin position="51"/>
        <end position="242"/>
    </location>
</feature>
<feature type="region of interest" description="Disordered" evidence="3">
    <location>
        <begin position="279"/>
        <end position="363"/>
    </location>
</feature>
<feature type="region of interest" description="G1" evidence="1">
    <location>
        <begin position="463"/>
        <end position="470"/>
    </location>
</feature>
<feature type="region of interest" description="G2" evidence="1">
    <location>
        <begin position="488"/>
        <end position="492"/>
    </location>
</feature>
<feature type="region of interest" description="G3" evidence="1">
    <location>
        <begin position="509"/>
        <end position="512"/>
    </location>
</feature>
<feature type="region of interest" description="G4" evidence="1">
    <location>
        <begin position="563"/>
        <end position="566"/>
    </location>
</feature>
<feature type="region of interest" description="G5" evidence="1">
    <location>
        <begin position="599"/>
        <end position="601"/>
    </location>
</feature>
<feature type="compositionally biased region" description="Basic and acidic residues" evidence="3">
    <location>
        <begin position="80"/>
        <end position="89"/>
    </location>
</feature>
<feature type="compositionally biased region" description="Basic and acidic residues" evidence="3">
    <location>
        <begin position="98"/>
        <end position="111"/>
    </location>
</feature>
<feature type="compositionally biased region" description="Polar residues" evidence="3">
    <location>
        <begin position="131"/>
        <end position="140"/>
    </location>
</feature>
<feature type="compositionally biased region" description="Basic and acidic residues" evidence="3">
    <location>
        <begin position="149"/>
        <end position="188"/>
    </location>
</feature>
<feature type="compositionally biased region" description="Polar residues" evidence="3">
    <location>
        <begin position="191"/>
        <end position="207"/>
    </location>
</feature>
<feature type="compositionally biased region" description="Basic and acidic residues" evidence="3">
    <location>
        <begin position="229"/>
        <end position="242"/>
    </location>
</feature>
<feature type="compositionally biased region" description="Polar residues" evidence="3">
    <location>
        <begin position="282"/>
        <end position="291"/>
    </location>
</feature>
<feature type="compositionally biased region" description="Basic and acidic residues" evidence="3">
    <location>
        <begin position="300"/>
        <end position="317"/>
    </location>
</feature>
<feature type="compositionally biased region" description="Low complexity" evidence="3">
    <location>
        <begin position="322"/>
        <end position="338"/>
    </location>
</feature>
<feature type="compositionally biased region" description="Basic residues" evidence="3">
    <location>
        <begin position="339"/>
        <end position="348"/>
    </location>
</feature>
<feature type="binding site" evidence="2">
    <location>
        <begin position="463"/>
        <end position="470"/>
    </location>
    <ligand>
        <name>GTP</name>
        <dbReference type="ChEBI" id="CHEBI:37565"/>
    </ligand>
</feature>
<feature type="binding site" evidence="2">
    <location>
        <begin position="509"/>
        <end position="513"/>
    </location>
    <ligand>
        <name>GTP</name>
        <dbReference type="ChEBI" id="CHEBI:37565"/>
    </ligand>
</feature>
<feature type="binding site" evidence="2">
    <location>
        <begin position="563"/>
        <end position="566"/>
    </location>
    <ligand>
        <name>GTP</name>
        <dbReference type="ChEBI" id="CHEBI:37565"/>
    </ligand>
</feature>
<reference key="1">
    <citation type="journal article" date="2008" name="J. Bacteriol.">
        <title>Genome sequence of a nephritogenic and highly transformable M49 strain of Streptococcus pyogenes.</title>
        <authorList>
            <person name="McShan W.M."/>
            <person name="Ferretti J.J."/>
            <person name="Karasawa T."/>
            <person name="Suvorov A.N."/>
            <person name="Lin S."/>
            <person name="Qin B."/>
            <person name="Jia H."/>
            <person name="Kenton S."/>
            <person name="Najar F."/>
            <person name="Wu H."/>
            <person name="Scott J."/>
            <person name="Roe B.A."/>
            <person name="Savic D.J."/>
        </authorList>
    </citation>
    <scope>NUCLEOTIDE SEQUENCE [LARGE SCALE GENOMIC DNA]</scope>
    <source>
        <strain>NZ131</strain>
    </source>
</reference>
<dbReference type="EMBL" id="CP000829">
    <property type="protein sequence ID" value="ACI61615.1"/>
    <property type="molecule type" value="Genomic_DNA"/>
</dbReference>
<dbReference type="SMR" id="B5XHV3"/>
<dbReference type="KEGG" id="soz:Spy49_1337c"/>
<dbReference type="HOGENOM" id="CLU_006301_5_0_9"/>
<dbReference type="Proteomes" id="UP000001039">
    <property type="component" value="Chromosome"/>
</dbReference>
<dbReference type="GO" id="GO:0005829">
    <property type="term" value="C:cytosol"/>
    <property type="evidence" value="ECO:0007669"/>
    <property type="project" value="TreeGrafter"/>
</dbReference>
<dbReference type="GO" id="GO:0005525">
    <property type="term" value="F:GTP binding"/>
    <property type="evidence" value="ECO:0007669"/>
    <property type="project" value="UniProtKB-KW"/>
</dbReference>
<dbReference type="GO" id="GO:0003924">
    <property type="term" value="F:GTPase activity"/>
    <property type="evidence" value="ECO:0007669"/>
    <property type="project" value="UniProtKB-UniRule"/>
</dbReference>
<dbReference type="GO" id="GO:0003743">
    <property type="term" value="F:translation initiation factor activity"/>
    <property type="evidence" value="ECO:0007669"/>
    <property type="project" value="UniProtKB-UniRule"/>
</dbReference>
<dbReference type="CDD" id="cd01887">
    <property type="entry name" value="IF2_eIF5B"/>
    <property type="match status" value="1"/>
</dbReference>
<dbReference type="CDD" id="cd03702">
    <property type="entry name" value="IF2_mtIF2_II"/>
    <property type="match status" value="1"/>
</dbReference>
<dbReference type="CDD" id="cd03692">
    <property type="entry name" value="mtIF2_IVc"/>
    <property type="match status" value="1"/>
</dbReference>
<dbReference type="FunFam" id="2.40.30.10:FF:000007">
    <property type="entry name" value="Translation initiation factor IF-2"/>
    <property type="match status" value="1"/>
</dbReference>
<dbReference type="FunFam" id="2.40.30.10:FF:000008">
    <property type="entry name" value="Translation initiation factor IF-2"/>
    <property type="match status" value="1"/>
</dbReference>
<dbReference type="FunFam" id="3.40.50.10050:FF:000001">
    <property type="entry name" value="Translation initiation factor IF-2"/>
    <property type="match status" value="1"/>
</dbReference>
<dbReference type="FunFam" id="3.40.50.300:FF:000019">
    <property type="entry name" value="Translation initiation factor IF-2"/>
    <property type="match status" value="1"/>
</dbReference>
<dbReference type="Gene3D" id="1.10.10.2480">
    <property type="match status" value="1"/>
</dbReference>
<dbReference type="Gene3D" id="3.40.50.300">
    <property type="entry name" value="P-loop containing nucleotide triphosphate hydrolases"/>
    <property type="match status" value="1"/>
</dbReference>
<dbReference type="Gene3D" id="2.40.30.10">
    <property type="entry name" value="Translation factors"/>
    <property type="match status" value="2"/>
</dbReference>
<dbReference type="Gene3D" id="3.40.50.10050">
    <property type="entry name" value="Translation initiation factor IF- 2, domain 3"/>
    <property type="match status" value="1"/>
</dbReference>
<dbReference type="HAMAP" id="MF_00100_B">
    <property type="entry name" value="IF_2_B"/>
    <property type="match status" value="1"/>
</dbReference>
<dbReference type="InterPro" id="IPR053905">
    <property type="entry name" value="EF-G-like_DII"/>
</dbReference>
<dbReference type="InterPro" id="IPR044145">
    <property type="entry name" value="IF2_II"/>
</dbReference>
<dbReference type="InterPro" id="IPR006847">
    <property type="entry name" value="IF2_N"/>
</dbReference>
<dbReference type="InterPro" id="IPR027417">
    <property type="entry name" value="P-loop_NTPase"/>
</dbReference>
<dbReference type="InterPro" id="IPR005225">
    <property type="entry name" value="Small_GTP-bd"/>
</dbReference>
<dbReference type="InterPro" id="IPR000795">
    <property type="entry name" value="T_Tr_GTP-bd_dom"/>
</dbReference>
<dbReference type="InterPro" id="IPR000178">
    <property type="entry name" value="TF_IF2_bacterial-like"/>
</dbReference>
<dbReference type="InterPro" id="IPR015760">
    <property type="entry name" value="TIF_IF2"/>
</dbReference>
<dbReference type="InterPro" id="IPR023115">
    <property type="entry name" value="TIF_IF2_dom3"/>
</dbReference>
<dbReference type="InterPro" id="IPR036925">
    <property type="entry name" value="TIF_IF2_dom3_sf"/>
</dbReference>
<dbReference type="InterPro" id="IPR009000">
    <property type="entry name" value="Transl_B-barrel_sf"/>
</dbReference>
<dbReference type="NCBIfam" id="TIGR00487">
    <property type="entry name" value="IF-2"/>
    <property type="match status" value="1"/>
</dbReference>
<dbReference type="NCBIfam" id="TIGR00231">
    <property type="entry name" value="small_GTP"/>
    <property type="match status" value="1"/>
</dbReference>
<dbReference type="PANTHER" id="PTHR43381:SF5">
    <property type="entry name" value="TR-TYPE G DOMAIN-CONTAINING PROTEIN"/>
    <property type="match status" value="1"/>
</dbReference>
<dbReference type="PANTHER" id="PTHR43381">
    <property type="entry name" value="TRANSLATION INITIATION FACTOR IF-2-RELATED"/>
    <property type="match status" value="1"/>
</dbReference>
<dbReference type="Pfam" id="PF22042">
    <property type="entry name" value="EF-G_D2"/>
    <property type="match status" value="1"/>
</dbReference>
<dbReference type="Pfam" id="PF00009">
    <property type="entry name" value="GTP_EFTU"/>
    <property type="match status" value="1"/>
</dbReference>
<dbReference type="Pfam" id="PF11987">
    <property type="entry name" value="IF-2"/>
    <property type="match status" value="1"/>
</dbReference>
<dbReference type="Pfam" id="PF04760">
    <property type="entry name" value="IF2_N"/>
    <property type="match status" value="2"/>
</dbReference>
<dbReference type="PRINTS" id="PR00449">
    <property type="entry name" value="RASTRNSFRMNG"/>
</dbReference>
<dbReference type="SUPFAM" id="SSF52156">
    <property type="entry name" value="Initiation factor IF2/eIF5b, domain 3"/>
    <property type="match status" value="1"/>
</dbReference>
<dbReference type="SUPFAM" id="SSF52540">
    <property type="entry name" value="P-loop containing nucleoside triphosphate hydrolases"/>
    <property type="match status" value="1"/>
</dbReference>
<dbReference type="SUPFAM" id="SSF50447">
    <property type="entry name" value="Translation proteins"/>
    <property type="match status" value="2"/>
</dbReference>
<dbReference type="PROSITE" id="PS51722">
    <property type="entry name" value="G_TR_2"/>
    <property type="match status" value="1"/>
</dbReference>
<dbReference type="PROSITE" id="PS01176">
    <property type="entry name" value="IF2"/>
    <property type="match status" value="1"/>
</dbReference>
<keyword id="KW-0963">Cytoplasm</keyword>
<keyword id="KW-0342">GTP-binding</keyword>
<keyword id="KW-0396">Initiation factor</keyword>
<keyword id="KW-0547">Nucleotide-binding</keyword>
<keyword id="KW-0648">Protein biosynthesis</keyword>
<sequence length="953" mass="105560">MSKKRLHEIAKEIGKSSKEVVEYAKYLGLDVKSHASSVEEADAKKIISSFSKASKPDVTASQTVKPKEVAQPSVTVVKETGSEHVEKTQVSKPKSRNFKAEREARAKEQAARKQANGSSHRSQERRGGYRQPNNHQTNEQGNKRITHRSQGDTNDKRIERKASNVSPRHDNHQLVGDRNRSFAKENHKNGRFTNQKKQGRQEPQSKSPKIDFKARAAALKAEQNAEYSRQSETRFRAQQEAKRLAELARQEAKEAALKAQAEEMSHREAALKSIEEAETKLKSSNISAKSTADNRRKKQARPEKNRELTHHSQEGQKKNKKSWNSQNQVRNQKNSNWNKNKKTKKGKNVKNTNTAPKPVTERKFHELPKEFEYTEGMTVAEIAKRIKREPAEIVKKLFMMGVMATQNQSLDGDTIELLMVDYGIEAKAKVEVDNADIERFFEDENYLNPENIVERAPVVTIMGHVDHGKTTLLDTLRNSRVATGEAGGITQHIGAYQIEEAGKKITFLDTPGHAAFTSMRARGASVTDITILIVAADDGVMPQTIEAINHSKAAGVPIIVAINKIDKPGANPERVIAELAEYGIISTAWGGECEFVEISAKFNKNIDELLETVLLVAEVEELKADPTVRAIGTVIEARLDKGKGAIATLLVQQGTLHVQDPIVVGNTFGRVRAMVNDLGRRVKSAEPSTPVSITGLNETPMAGDHFAVYADEKAARAAGEERSKRALLKQRQNTQRVSLDNLFDTLKAGEIKTVNVIIKADVQGSVEALAASLVKIEVEGVRVNVVHSAVGAINESDVTLAEASNAVIIGFNVRPTPQARQQADTDDVEIRLHSIIYKVIEEVEEAMKGKLDPVYQEKILGEAIIRETFKVSKVGTIGGFMVINGKVTRDSSVRVIRDSVVIFDGKLASLKHYKDDVKEVGNAQEGGLMIENFNDLKVDDTIEAYIMEEIVRK</sequence>
<evidence type="ECO:0000250" key="1"/>
<evidence type="ECO:0000255" key="2">
    <source>
        <dbReference type="HAMAP-Rule" id="MF_00100"/>
    </source>
</evidence>
<evidence type="ECO:0000256" key="3">
    <source>
        <dbReference type="SAM" id="MobiDB-lite"/>
    </source>
</evidence>
<organism>
    <name type="scientific">Streptococcus pyogenes serotype M49 (strain NZ131)</name>
    <dbReference type="NCBI Taxonomy" id="471876"/>
    <lineage>
        <taxon>Bacteria</taxon>
        <taxon>Bacillati</taxon>
        <taxon>Bacillota</taxon>
        <taxon>Bacilli</taxon>
        <taxon>Lactobacillales</taxon>
        <taxon>Streptococcaceae</taxon>
        <taxon>Streptococcus</taxon>
    </lineage>
</organism>
<comment type="function">
    <text evidence="2">One of the essential components for the initiation of protein synthesis. Protects formylmethionyl-tRNA from spontaneous hydrolysis and promotes its binding to the 30S ribosomal subunits. Also involved in the hydrolysis of GTP during the formation of the 70S ribosomal complex.</text>
</comment>
<comment type="subcellular location">
    <subcellularLocation>
        <location evidence="2">Cytoplasm</location>
    </subcellularLocation>
</comment>
<comment type="similarity">
    <text evidence="2">Belongs to the TRAFAC class translation factor GTPase superfamily. Classic translation factor GTPase family. IF-2 subfamily.</text>
</comment>
<accession>B5XHV3</accession>
<gene>
    <name evidence="2" type="primary">infB</name>
    <name type="ordered locus">Spy49_1337c</name>
</gene>